<sequence>MRIIVLGAGVIGVTSAYFLAKAGHEVTVLDRQAGPALETSYANAGEVSPGYSSPWAAPGIPMKAAKWLFMKHAPLIVRPTLDPVTWRWMLQMLANCTSARYAVNKGRMVRIAEYSRDVLMQLRADTGIRYDERMQGTLEVFRSQKQLDGIAKDIAVLKADGVPFEVLDREGCVQVEPGLKPAAHKIVGGLRLPGDETGDCFLFTNALAKLAEGLGVRFVYNVDLKRLRRDGDRIAAVETAQGDYIADSYVAALGSYMPGFLAPLGLDLPIYPVKGYSITVPILDEAKAPVSTVMDEYYKIAITRLGSRIRVGGMAEIARFNKDLPPARQATLTLSVEDLFGGAGDQKKAEFWCGLRPMTPDGTPIIGKTKFGNLFLNGGHGTLGWTMSCGSARLLSDIISGAKPEISTEGLDLSRYR</sequence>
<gene>
    <name evidence="1" type="primary">dadA</name>
    <name type="ordered locus">AZC_2066</name>
</gene>
<comment type="function">
    <text evidence="1">Oxidative deamination of D-amino acids.</text>
</comment>
<comment type="catalytic activity">
    <reaction evidence="1">
        <text>a D-alpha-amino acid + A + H2O = a 2-oxocarboxylate + AH2 + NH4(+)</text>
        <dbReference type="Rhea" id="RHEA:18125"/>
        <dbReference type="ChEBI" id="CHEBI:13193"/>
        <dbReference type="ChEBI" id="CHEBI:15377"/>
        <dbReference type="ChEBI" id="CHEBI:17499"/>
        <dbReference type="ChEBI" id="CHEBI:28938"/>
        <dbReference type="ChEBI" id="CHEBI:35179"/>
        <dbReference type="ChEBI" id="CHEBI:59871"/>
    </reaction>
</comment>
<comment type="cofactor">
    <cofactor evidence="1">
        <name>FAD</name>
        <dbReference type="ChEBI" id="CHEBI:57692"/>
    </cofactor>
</comment>
<comment type="pathway">
    <text>Amino-acid degradation; D-alanine degradation; NH(3) and pyruvate from D-alanine: step 1/1.</text>
</comment>
<comment type="similarity">
    <text evidence="1">Belongs to the DadA oxidoreductase family.</text>
</comment>
<protein>
    <recommendedName>
        <fullName evidence="1">D-amino acid dehydrogenase</fullName>
        <ecNumber evidence="1">1.4.99.-</ecNumber>
    </recommendedName>
</protein>
<organism>
    <name type="scientific">Azorhizobium caulinodans (strain ATCC 43989 / DSM 5975 / JCM 20966 / LMG 6465 / NBRC 14845 / NCIMB 13405 / ORS 571)</name>
    <dbReference type="NCBI Taxonomy" id="438753"/>
    <lineage>
        <taxon>Bacteria</taxon>
        <taxon>Pseudomonadati</taxon>
        <taxon>Pseudomonadota</taxon>
        <taxon>Alphaproteobacteria</taxon>
        <taxon>Hyphomicrobiales</taxon>
        <taxon>Xanthobacteraceae</taxon>
        <taxon>Azorhizobium</taxon>
    </lineage>
</organism>
<evidence type="ECO:0000255" key="1">
    <source>
        <dbReference type="HAMAP-Rule" id="MF_01202"/>
    </source>
</evidence>
<name>DADA_AZOC5</name>
<dbReference type="EC" id="1.4.99.-" evidence="1"/>
<dbReference type="EMBL" id="AP009384">
    <property type="protein sequence ID" value="BAF88064.1"/>
    <property type="molecule type" value="Genomic_DNA"/>
</dbReference>
<dbReference type="RefSeq" id="WP_012170593.1">
    <property type="nucleotide sequence ID" value="NC_009937.1"/>
</dbReference>
<dbReference type="SMR" id="A8I711"/>
<dbReference type="STRING" id="438753.AZC_2066"/>
<dbReference type="KEGG" id="azc:AZC_2066"/>
<dbReference type="eggNOG" id="COG0665">
    <property type="taxonomic scope" value="Bacteria"/>
</dbReference>
<dbReference type="HOGENOM" id="CLU_007884_9_2_5"/>
<dbReference type="UniPathway" id="UPA00043">
    <property type="reaction ID" value="UER00498"/>
</dbReference>
<dbReference type="Proteomes" id="UP000000270">
    <property type="component" value="Chromosome"/>
</dbReference>
<dbReference type="GO" id="GO:0005737">
    <property type="term" value="C:cytoplasm"/>
    <property type="evidence" value="ECO:0007669"/>
    <property type="project" value="TreeGrafter"/>
</dbReference>
<dbReference type="GO" id="GO:0005886">
    <property type="term" value="C:plasma membrane"/>
    <property type="evidence" value="ECO:0007669"/>
    <property type="project" value="TreeGrafter"/>
</dbReference>
<dbReference type="GO" id="GO:0008718">
    <property type="term" value="F:D-amino-acid dehydrogenase activity"/>
    <property type="evidence" value="ECO:0007669"/>
    <property type="project" value="UniProtKB-UniRule"/>
</dbReference>
<dbReference type="GO" id="GO:0055130">
    <property type="term" value="P:D-alanine catabolic process"/>
    <property type="evidence" value="ECO:0007669"/>
    <property type="project" value="UniProtKB-UniPathway"/>
</dbReference>
<dbReference type="FunFam" id="3.50.50.60:FF:000020">
    <property type="entry name" value="D-amino acid dehydrogenase"/>
    <property type="match status" value="1"/>
</dbReference>
<dbReference type="Gene3D" id="3.30.9.10">
    <property type="entry name" value="D-Amino Acid Oxidase, subunit A, domain 2"/>
    <property type="match status" value="1"/>
</dbReference>
<dbReference type="Gene3D" id="3.50.50.60">
    <property type="entry name" value="FAD/NAD(P)-binding domain"/>
    <property type="match status" value="2"/>
</dbReference>
<dbReference type="HAMAP" id="MF_01202">
    <property type="entry name" value="DadA"/>
    <property type="match status" value="1"/>
</dbReference>
<dbReference type="InterPro" id="IPR023080">
    <property type="entry name" value="DadA"/>
</dbReference>
<dbReference type="InterPro" id="IPR006076">
    <property type="entry name" value="FAD-dep_OxRdtase"/>
</dbReference>
<dbReference type="InterPro" id="IPR036188">
    <property type="entry name" value="FAD/NAD-bd_sf"/>
</dbReference>
<dbReference type="NCBIfam" id="NF001933">
    <property type="entry name" value="PRK00711.1"/>
    <property type="match status" value="1"/>
</dbReference>
<dbReference type="PANTHER" id="PTHR13847:SF280">
    <property type="entry name" value="D-AMINO ACID DEHYDROGENASE"/>
    <property type="match status" value="1"/>
</dbReference>
<dbReference type="PANTHER" id="PTHR13847">
    <property type="entry name" value="SARCOSINE DEHYDROGENASE-RELATED"/>
    <property type="match status" value="1"/>
</dbReference>
<dbReference type="Pfam" id="PF01266">
    <property type="entry name" value="DAO"/>
    <property type="match status" value="1"/>
</dbReference>
<dbReference type="SUPFAM" id="SSF54373">
    <property type="entry name" value="FAD-linked reductases, C-terminal domain"/>
    <property type="match status" value="1"/>
</dbReference>
<dbReference type="SUPFAM" id="SSF51905">
    <property type="entry name" value="FAD/NAD(P)-binding domain"/>
    <property type="match status" value="1"/>
</dbReference>
<keyword id="KW-0274">FAD</keyword>
<keyword id="KW-0285">Flavoprotein</keyword>
<keyword id="KW-0560">Oxidoreductase</keyword>
<keyword id="KW-1185">Reference proteome</keyword>
<reference key="1">
    <citation type="submission" date="2007-04" db="EMBL/GenBank/DDBJ databases">
        <title>Complete genome sequence of the nitrogen-fixing bacterium Azorhizobium caulinodans ORS571.</title>
        <authorList>
            <person name="Lee K.B."/>
            <person name="Backer P.D."/>
            <person name="Aono T."/>
            <person name="Liu C.T."/>
            <person name="Suzuki S."/>
            <person name="Suzuki T."/>
            <person name="Kaneko T."/>
            <person name="Yamada M."/>
            <person name="Tabata S."/>
            <person name="Kupfer D.M."/>
            <person name="Najar F.Z."/>
            <person name="Wiley G.B."/>
            <person name="Roe B."/>
            <person name="Binnewies T."/>
            <person name="Ussery D."/>
            <person name="Vereecke D."/>
            <person name="Gevers D."/>
            <person name="Holsters M."/>
            <person name="Oyaizu H."/>
        </authorList>
    </citation>
    <scope>NUCLEOTIDE SEQUENCE [LARGE SCALE GENOMIC DNA]</scope>
    <source>
        <strain>ATCC 43989 / DSM 5975 / JCM 20966 / LMG 6465 / NBRC 14845 / NCIMB 13405 / ORS 571</strain>
    </source>
</reference>
<feature type="chain" id="PRO_1000073101" description="D-amino acid dehydrogenase">
    <location>
        <begin position="1"/>
        <end position="417"/>
    </location>
</feature>
<feature type="binding site" evidence="1">
    <location>
        <begin position="3"/>
        <end position="17"/>
    </location>
    <ligand>
        <name>FAD</name>
        <dbReference type="ChEBI" id="CHEBI:57692"/>
    </ligand>
</feature>
<proteinExistence type="inferred from homology"/>
<accession>A8I711</accession>